<name>GCSH2_DICDI</name>
<dbReference type="EMBL" id="AAFI02000171">
    <property type="protein sequence ID" value="EAL62017.1"/>
    <property type="molecule type" value="Genomic_DNA"/>
</dbReference>
<dbReference type="RefSeq" id="XP_635521.1">
    <property type="nucleotide sequence ID" value="XM_630429.1"/>
</dbReference>
<dbReference type="SMR" id="Q54FI0"/>
<dbReference type="FunCoup" id="Q54FI0">
    <property type="interactions" value="127"/>
</dbReference>
<dbReference type="STRING" id="44689.Q54FI0"/>
<dbReference type="PaxDb" id="44689-DDB0231213"/>
<dbReference type="EnsemblProtists" id="EAL62017">
    <property type="protein sequence ID" value="EAL62017"/>
    <property type="gene ID" value="DDB_G0290845"/>
</dbReference>
<dbReference type="GeneID" id="8627858"/>
<dbReference type="KEGG" id="ddi:DDB_G0290845"/>
<dbReference type="dictyBase" id="DDB_G0290845">
    <property type="gene designation" value="gcvH2"/>
</dbReference>
<dbReference type="VEuPathDB" id="AmoebaDB:DDB_G0290845"/>
<dbReference type="eggNOG" id="KOG3373">
    <property type="taxonomic scope" value="Eukaryota"/>
</dbReference>
<dbReference type="HOGENOM" id="CLU_097408_2_0_1"/>
<dbReference type="InParanoid" id="Q54FI0"/>
<dbReference type="OMA" id="GPCLPWP"/>
<dbReference type="PhylomeDB" id="Q54FI0"/>
<dbReference type="Reactome" id="R-DDI-6783984">
    <property type="pathway name" value="Glycine degradation"/>
</dbReference>
<dbReference type="Reactome" id="R-DDI-9857492">
    <property type="pathway name" value="Protein lipoylation"/>
</dbReference>
<dbReference type="PRO" id="PR:Q54FI0"/>
<dbReference type="Proteomes" id="UP000002195">
    <property type="component" value="Chromosome 5"/>
</dbReference>
<dbReference type="GO" id="GO:0005960">
    <property type="term" value="C:glycine cleavage complex"/>
    <property type="evidence" value="ECO:0000318"/>
    <property type="project" value="GO_Central"/>
</dbReference>
<dbReference type="GO" id="GO:0005739">
    <property type="term" value="C:mitochondrion"/>
    <property type="evidence" value="ECO:0000318"/>
    <property type="project" value="GO_Central"/>
</dbReference>
<dbReference type="GO" id="GO:0019464">
    <property type="term" value="P:glycine decarboxylation via glycine cleavage system"/>
    <property type="evidence" value="ECO:0000318"/>
    <property type="project" value="GO_Central"/>
</dbReference>
<dbReference type="CDD" id="cd06848">
    <property type="entry name" value="GCS_H"/>
    <property type="match status" value="1"/>
</dbReference>
<dbReference type="Gene3D" id="2.40.50.100">
    <property type="match status" value="1"/>
</dbReference>
<dbReference type="InterPro" id="IPR000089">
    <property type="entry name" value="Biotin_lipoyl"/>
</dbReference>
<dbReference type="InterPro" id="IPR002930">
    <property type="entry name" value="GCV_H"/>
</dbReference>
<dbReference type="InterPro" id="IPR033753">
    <property type="entry name" value="GCV_H/Fam206"/>
</dbReference>
<dbReference type="InterPro" id="IPR011053">
    <property type="entry name" value="Single_hybrid_motif"/>
</dbReference>
<dbReference type="PANTHER" id="PTHR11715">
    <property type="entry name" value="GLYCINE CLEAVAGE SYSTEM H PROTEIN"/>
    <property type="match status" value="1"/>
</dbReference>
<dbReference type="PANTHER" id="PTHR11715:SF7">
    <property type="entry name" value="GLYCINE CLEAVAGE SYSTEM H-LIKE PROTEIN GCVH2"/>
    <property type="match status" value="1"/>
</dbReference>
<dbReference type="Pfam" id="PF01597">
    <property type="entry name" value="GCV_H"/>
    <property type="match status" value="1"/>
</dbReference>
<dbReference type="SUPFAM" id="SSF51230">
    <property type="entry name" value="Single hybrid motif"/>
    <property type="match status" value="1"/>
</dbReference>
<dbReference type="PROSITE" id="PS50968">
    <property type="entry name" value="BIOTINYL_LIPOYL"/>
    <property type="match status" value="1"/>
</dbReference>
<sequence>MNIIKTGIKQSLVSGIYSKVGIRAFCTHYSAELEWVKLSDDNKVATVGLSSFGAQRLGKINYVELPKEHRKCRREEKFGVLESSNATAFGLYAPVSGEVLEVNEKLKKSPSLLNEDPANNWMVKFKVSKPDEFKKLMDSNKYKKFVQWYR</sequence>
<proteinExistence type="inferred from homology"/>
<comment type="similarity">
    <text evidence="2">Belongs to the GcvH family.</text>
</comment>
<comment type="caution">
    <text evidence="2">Asn-85 is present instead of the conserved Lys which is expected to bind the lipoyl cofactor.</text>
</comment>
<keyword id="KW-1185">Reference proteome</keyword>
<organism>
    <name type="scientific">Dictyostelium discoideum</name>
    <name type="common">Social amoeba</name>
    <dbReference type="NCBI Taxonomy" id="44689"/>
    <lineage>
        <taxon>Eukaryota</taxon>
        <taxon>Amoebozoa</taxon>
        <taxon>Evosea</taxon>
        <taxon>Eumycetozoa</taxon>
        <taxon>Dictyostelia</taxon>
        <taxon>Dictyosteliales</taxon>
        <taxon>Dictyosteliaceae</taxon>
        <taxon>Dictyostelium</taxon>
    </lineage>
</organism>
<protein>
    <recommendedName>
        <fullName>Glycine cleavage system H-like protein gcvH2</fullName>
    </recommendedName>
</protein>
<feature type="chain" id="PRO_0000328548" description="Glycine cleavage system H-like protein gcvH2">
    <location>
        <begin position="1"/>
        <end position="150"/>
    </location>
</feature>
<feature type="domain" description="Lipoyl-binding" evidence="1">
    <location>
        <begin position="44"/>
        <end position="126"/>
    </location>
</feature>
<accession>Q54FI0</accession>
<evidence type="ECO:0000255" key="1">
    <source>
        <dbReference type="PROSITE-ProRule" id="PRU01066"/>
    </source>
</evidence>
<evidence type="ECO:0000305" key="2"/>
<reference key="1">
    <citation type="journal article" date="2005" name="Nature">
        <title>The genome of the social amoeba Dictyostelium discoideum.</title>
        <authorList>
            <person name="Eichinger L."/>
            <person name="Pachebat J.A."/>
            <person name="Gloeckner G."/>
            <person name="Rajandream M.A."/>
            <person name="Sucgang R."/>
            <person name="Berriman M."/>
            <person name="Song J."/>
            <person name="Olsen R."/>
            <person name="Szafranski K."/>
            <person name="Xu Q."/>
            <person name="Tunggal B."/>
            <person name="Kummerfeld S."/>
            <person name="Madera M."/>
            <person name="Konfortov B.A."/>
            <person name="Rivero F."/>
            <person name="Bankier A.T."/>
            <person name="Lehmann R."/>
            <person name="Hamlin N."/>
            <person name="Davies R."/>
            <person name="Gaudet P."/>
            <person name="Fey P."/>
            <person name="Pilcher K."/>
            <person name="Chen G."/>
            <person name="Saunders D."/>
            <person name="Sodergren E.J."/>
            <person name="Davis P."/>
            <person name="Kerhornou A."/>
            <person name="Nie X."/>
            <person name="Hall N."/>
            <person name="Anjard C."/>
            <person name="Hemphill L."/>
            <person name="Bason N."/>
            <person name="Farbrother P."/>
            <person name="Desany B."/>
            <person name="Just E."/>
            <person name="Morio T."/>
            <person name="Rost R."/>
            <person name="Churcher C.M."/>
            <person name="Cooper J."/>
            <person name="Haydock S."/>
            <person name="van Driessche N."/>
            <person name="Cronin A."/>
            <person name="Goodhead I."/>
            <person name="Muzny D.M."/>
            <person name="Mourier T."/>
            <person name="Pain A."/>
            <person name="Lu M."/>
            <person name="Harper D."/>
            <person name="Lindsay R."/>
            <person name="Hauser H."/>
            <person name="James K.D."/>
            <person name="Quiles M."/>
            <person name="Madan Babu M."/>
            <person name="Saito T."/>
            <person name="Buchrieser C."/>
            <person name="Wardroper A."/>
            <person name="Felder M."/>
            <person name="Thangavelu M."/>
            <person name="Johnson D."/>
            <person name="Knights A."/>
            <person name="Loulseged H."/>
            <person name="Mungall K.L."/>
            <person name="Oliver K."/>
            <person name="Price C."/>
            <person name="Quail M.A."/>
            <person name="Urushihara H."/>
            <person name="Hernandez J."/>
            <person name="Rabbinowitsch E."/>
            <person name="Steffen D."/>
            <person name="Sanders M."/>
            <person name="Ma J."/>
            <person name="Kohara Y."/>
            <person name="Sharp S."/>
            <person name="Simmonds M.N."/>
            <person name="Spiegler S."/>
            <person name="Tivey A."/>
            <person name="Sugano S."/>
            <person name="White B."/>
            <person name="Walker D."/>
            <person name="Woodward J.R."/>
            <person name="Winckler T."/>
            <person name="Tanaka Y."/>
            <person name="Shaulsky G."/>
            <person name="Schleicher M."/>
            <person name="Weinstock G.M."/>
            <person name="Rosenthal A."/>
            <person name="Cox E.C."/>
            <person name="Chisholm R.L."/>
            <person name="Gibbs R.A."/>
            <person name="Loomis W.F."/>
            <person name="Platzer M."/>
            <person name="Kay R.R."/>
            <person name="Williams J.G."/>
            <person name="Dear P.H."/>
            <person name="Noegel A.A."/>
            <person name="Barrell B.G."/>
            <person name="Kuspa A."/>
        </authorList>
    </citation>
    <scope>NUCLEOTIDE SEQUENCE [LARGE SCALE GENOMIC DNA]</scope>
    <source>
        <strain>AX4</strain>
    </source>
</reference>
<gene>
    <name type="primary">gcvH2</name>
    <name type="synonym">gcvH</name>
    <name type="ORF">DDB_G0290845</name>
</gene>